<gene>
    <name evidence="1" type="primary">aat</name>
    <name type="ordered locus">SbBS512_E2444</name>
</gene>
<protein>
    <recommendedName>
        <fullName evidence="1">Leucyl/phenylalanyl-tRNA--protein transferase</fullName>
        <ecNumber evidence="1">2.3.2.6</ecNumber>
    </recommendedName>
    <alternativeName>
        <fullName evidence="1">L/F-transferase</fullName>
    </alternativeName>
    <alternativeName>
        <fullName evidence="1">Leucyltransferase</fullName>
    </alternativeName>
    <alternativeName>
        <fullName evidence="1">Phenyalanyltransferase</fullName>
    </alternativeName>
</protein>
<proteinExistence type="inferred from homology"/>
<sequence length="234" mass="26619">MRLVQLSRHSIAFPSPEGALREPNGLLALGGDLSPARLLMAYQRGIFPWFSPGDPILWWSPDPRAVLWPESLHISRSMKRFHKRSPYRVTMNYAFGQVIEGCASDREEGTWITRGVVEAYHRLHELGHAHSIEVWREDELVGGMYGVAQGTLFCGESMFSRMENASKTALLVFCEEFIGHGGKLIDCQVLNDHTASLGACEIPRRDYLNYLNQMRLGRLPNNFWVPRCLFSPQE</sequence>
<reference key="1">
    <citation type="submission" date="2008-05" db="EMBL/GenBank/DDBJ databases">
        <title>Complete sequence of Shigella boydii serotype 18 strain BS512.</title>
        <authorList>
            <person name="Rasko D.A."/>
            <person name="Rosovitz M."/>
            <person name="Maurelli A.T."/>
            <person name="Myers G."/>
            <person name="Seshadri R."/>
            <person name="Cer R."/>
            <person name="Jiang L."/>
            <person name="Ravel J."/>
            <person name="Sebastian Y."/>
        </authorList>
    </citation>
    <scope>NUCLEOTIDE SEQUENCE [LARGE SCALE GENOMIC DNA]</scope>
    <source>
        <strain>CDC 3083-94 / BS512</strain>
    </source>
</reference>
<accession>B2TUJ4</accession>
<evidence type="ECO:0000255" key="1">
    <source>
        <dbReference type="HAMAP-Rule" id="MF_00688"/>
    </source>
</evidence>
<comment type="function">
    <text evidence="1">Functions in the N-end rule pathway of protein degradation where it conjugates Leu, Phe and, less efficiently, Met from aminoacyl-tRNAs to the N-termini of proteins containing an N-terminal arginine or lysine.</text>
</comment>
<comment type="catalytic activity">
    <reaction evidence="1">
        <text>N-terminal L-lysyl-[protein] + L-leucyl-tRNA(Leu) = N-terminal L-leucyl-L-lysyl-[protein] + tRNA(Leu) + H(+)</text>
        <dbReference type="Rhea" id="RHEA:12340"/>
        <dbReference type="Rhea" id="RHEA-COMP:9613"/>
        <dbReference type="Rhea" id="RHEA-COMP:9622"/>
        <dbReference type="Rhea" id="RHEA-COMP:12670"/>
        <dbReference type="Rhea" id="RHEA-COMP:12671"/>
        <dbReference type="ChEBI" id="CHEBI:15378"/>
        <dbReference type="ChEBI" id="CHEBI:65249"/>
        <dbReference type="ChEBI" id="CHEBI:78442"/>
        <dbReference type="ChEBI" id="CHEBI:78494"/>
        <dbReference type="ChEBI" id="CHEBI:133043"/>
        <dbReference type="EC" id="2.3.2.6"/>
    </reaction>
</comment>
<comment type="catalytic activity">
    <reaction evidence="1">
        <text>N-terminal L-arginyl-[protein] + L-leucyl-tRNA(Leu) = N-terminal L-leucyl-L-arginyl-[protein] + tRNA(Leu) + H(+)</text>
        <dbReference type="Rhea" id="RHEA:50416"/>
        <dbReference type="Rhea" id="RHEA-COMP:9613"/>
        <dbReference type="Rhea" id="RHEA-COMP:9622"/>
        <dbReference type="Rhea" id="RHEA-COMP:12672"/>
        <dbReference type="Rhea" id="RHEA-COMP:12673"/>
        <dbReference type="ChEBI" id="CHEBI:15378"/>
        <dbReference type="ChEBI" id="CHEBI:64719"/>
        <dbReference type="ChEBI" id="CHEBI:78442"/>
        <dbReference type="ChEBI" id="CHEBI:78494"/>
        <dbReference type="ChEBI" id="CHEBI:133044"/>
        <dbReference type="EC" id="2.3.2.6"/>
    </reaction>
</comment>
<comment type="catalytic activity">
    <reaction evidence="1">
        <text>L-phenylalanyl-tRNA(Phe) + an N-terminal L-alpha-aminoacyl-[protein] = an N-terminal L-phenylalanyl-L-alpha-aminoacyl-[protein] + tRNA(Phe)</text>
        <dbReference type="Rhea" id="RHEA:43632"/>
        <dbReference type="Rhea" id="RHEA-COMP:9668"/>
        <dbReference type="Rhea" id="RHEA-COMP:9699"/>
        <dbReference type="Rhea" id="RHEA-COMP:10636"/>
        <dbReference type="Rhea" id="RHEA-COMP:10637"/>
        <dbReference type="ChEBI" id="CHEBI:78442"/>
        <dbReference type="ChEBI" id="CHEBI:78531"/>
        <dbReference type="ChEBI" id="CHEBI:78597"/>
        <dbReference type="ChEBI" id="CHEBI:83561"/>
        <dbReference type="EC" id="2.3.2.6"/>
    </reaction>
</comment>
<comment type="subcellular location">
    <subcellularLocation>
        <location evidence="1">Cytoplasm</location>
    </subcellularLocation>
</comment>
<comment type="similarity">
    <text evidence="1">Belongs to the L/F-transferase family.</text>
</comment>
<dbReference type="EC" id="2.3.2.6" evidence="1"/>
<dbReference type="EMBL" id="CP001063">
    <property type="protein sequence ID" value="ACD10016.1"/>
    <property type="molecule type" value="Genomic_DNA"/>
</dbReference>
<dbReference type="RefSeq" id="WP_001241678.1">
    <property type="nucleotide sequence ID" value="NC_010658.1"/>
</dbReference>
<dbReference type="SMR" id="B2TUJ4"/>
<dbReference type="STRING" id="344609.SbBS512_E2444"/>
<dbReference type="GeneID" id="75206174"/>
<dbReference type="KEGG" id="sbc:SbBS512_E2444"/>
<dbReference type="HOGENOM" id="CLU_075045_0_0_6"/>
<dbReference type="Proteomes" id="UP000001030">
    <property type="component" value="Chromosome"/>
</dbReference>
<dbReference type="GO" id="GO:0005737">
    <property type="term" value="C:cytoplasm"/>
    <property type="evidence" value="ECO:0007669"/>
    <property type="project" value="UniProtKB-SubCell"/>
</dbReference>
<dbReference type="GO" id="GO:0008914">
    <property type="term" value="F:leucyl-tRNA--protein transferase activity"/>
    <property type="evidence" value="ECO:0007669"/>
    <property type="project" value="UniProtKB-UniRule"/>
</dbReference>
<dbReference type="GO" id="GO:0030163">
    <property type="term" value="P:protein catabolic process"/>
    <property type="evidence" value="ECO:0007669"/>
    <property type="project" value="UniProtKB-UniRule"/>
</dbReference>
<dbReference type="FunFam" id="3.30.70.3550:FF:000001">
    <property type="entry name" value="Leucyl/phenylalanyl-tRNA--protein transferase"/>
    <property type="match status" value="1"/>
</dbReference>
<dbReference type="FunFam" id="3.40.630.70:FF:000001">
    <property type="entry name" value="Leucyl/phenylalanyl-tRNA--protein transferase"/>
    <property type="match status" value="1"/>
</dbReference>
<dbReference type="Gene3D" id="3.40.630.70">
    <property type="entry name" value="Leucyl/phenylalanyl-tRNA-protein transferase, C-terminal domain"/>
    <property type="match status" value="1"/>
</dbReference>
<dbReference type="Gene3D" id="3.30.70.3550">
    <property type="entry name" value="Leucyl/phenylalanyl-tRNA-protein transferase, N-terminal domain"/>
    <property type="match status" value="1"/>
</dbReference>
<dbReference type="HAMAP" id="MF_00688">
    <property type="entry name" value="Leu_Phe_trans"/>
    <property type="match status" value="1"/>
</dbReference>
<dbReference type="InterPro" id="IPR016181">
    <property type="entry name" value="Acyl_CoA_acyltransferase"/>
</dbReference>
<dbReference type="InterPro" id="IPR004616">
    <property type="entry name" value="Leu/Phe-tRNA_Trfase"/>
</dbReference>
<dbReference type="InterPro" id="IPR042203">
    <property type="entry name" value="Leu/Phe-tRNA_Trfase_C"/>
</dbReference>
<dbReference type="InterPro" id="IPR042221">
    <property type="entry name" value="Leu/Phe-tRNA_Trfase_N"/>
</dbReference>
<dbReference type="NCBIfam" id="TIGR00667">
    <property type="entry name" value="aat"/>
    <property type="match status" value="1"/>
</dbReference>
<dbReference type="PANTHER" id="PTHR30098">
    <property type="entry name" value="LEUCYL/PHENYLALANYL-TRNA--PROTEIN TRANSFERASE"/>
    <property type="match status" value="1"/>
</dbReference>
<dbReference type="PANTHER" id="PTHR30098:SF2">
    <property type="entry name" value="LEUCYL_PHENYLALANYL-TRNA--PROTEIN TRANSFERASE"/>
    <property type="match status" value="1"/>
</dbReference>
<dbReference type="Pfam" id="PF03588">
    <property type="entry name" value="Leu_Phe_trans"/>
    <property type="match status" value="1"/>
</dbReference>
<dbReference type="SUPFAM" id="SSF55729">
    <property type="entry name" value="Acyl-CoA N-acyltransferases (Nat)"/>
    <property type="match status" value="1"/>
</dbReference>
<name>LFTR_SHIB3</name>
<feature type="chain" id="PRO_1000131954" description="Leucyl/phenylalanyl-tRNA--protein transferase">
    <location>
        <begin position="1"/>
        <end position="234"/>
    </location>
</feature>
<keyword id="KW-0012">Acyltransferase</keyword>
<keyword id="KW-0963">Cytoplasm</keyword>
<keyword id="KW-1185">Reference proteome</keyword>
<keyword id="KW-0808">Transferase</keyword>
<organism>
    <name type="scientific">Shigella boydii serotype 18 (strain CDC 3083-94 / BS512)</name>
    <dbReference type="NCBI Taxonomy" id="344609"/>
    <lineage>
        <taxon>Bacteria</taxon>
        <taxon>Pseudomonadati</taxon>
        <taxon>Pseudomonadota</taxon>
        <taxon>Gammaproteobacteria</taxon>
        <taxon>Enterobacterales</taxon>
        <taxon>Enterobacteriaceae</taxon>
        <taxon>Shigella</taxon>
    </lineage>
</organism>